<comment type="function">
    <text evidence="1 5">Component of the signal peptidase complex (SPC) which catalyzes the cleavage of N-terminal signal sequences from nascent proteins as they are translocated into the lumen of the endoplasmic reticulum (PubMed:34388369). Enhances the enzymatic activity of SPC and facilitates the interactions between different components of the translocation site (By similarity).</text>
</comment>
<comment type="subunit">
    <text evidence="5">Component of the signal peptidase complex paralog A (SPC-A) composed of a catalytic subunit SEC11A and three accessory subunits SPCS1, SPCS2 and SPCS3 (PubMed:34388369). Component of the signal peptidase complex paralog C (SPC-C) composed of a catalytic subunit SEC11C and three accessory subunits SPCS1, SPCS2 and SPCS3 (PubMed:34388369). Within the complex, interacts with SEC11A or SEC11C and SPCS1 (PubMed:34388369). The complex induces a local thinning of the ER membrane which is used to measure the length of the signal peptide (SP) h-region of protein substrates (PubMed:34388369). This ensures the selectivity of the complex towards h-regions shorter than 18-20 amino acids (PubMed:34388369).</text>
</comment>
<comment type="interaction">
    <interactant intactId="EBI-1043352">
        <id>Q15005</id>
    </interactant>
    <interactant intactId="EBI-25474821">
        <id>P0DTC2</id>
        <label>S</label>
    </interactant>
    <organismsDiffer>true</organismsDiffer>
    <experiments>2</experiments>
</comment>
<comment type="subcellular location">
    <subcellularLocation>
        <location evidence="2">Endoplasmic reticulum membrane</location>
        <topology evidence="2">Multi-pass membrane protein</topology>
    </subcellularLocation>
</comment>
<comment type="similarity">
    <text evidence="7">Belongs to the SPCS2 family.</text>
</comment>
<comment type="sequence caution" evidence="7">
    <conflict type="erroneous initiation">
        <sequence resource="EMBL-CDS" id="AAH08063"/>
    </conflict>
</comment>
<comment type="sequence caution" evidence="7">
    <conflict type="erroneous initiation">
        <sequence resource="EMBL-CDS" id="AAH70276"/>
    </conflict>
</comment>
<comment type="sequence caution" evidence="7">
    <conflict type="erroneous initiation">
        <sequence resource="EMBL-CDS" id="AAH82231"/>
    </conflict>
</comment>
<comment type="sequence caution" evidence="7">
    <conflict type="erroneous initiation">
        <sequence resource="EMBL-CDS" id="BAA03492"/>
    </conflict>
</comment>
<name>SPCS2_HUMAN</name>
<keyword id="KW-0002">3D-structure</keyword>
<keyword id="KW-0007">Acetylation</keyword>
<keyword id="KW-0903">Direct protein sequencing</keyword>
<keyword id="KW-0256">Endoplasmic reticulum</keyword>
<keyword id="KW-0472">Membrane</keyword>
<keyword id="KW-1267">Proteomics identification</keyword>
<keyword id="KW-1185">Reference proteome</keyword>
<keyword id="KW-0812">Transmembrane</keyword>
<keyword id="KW-1133">Transmembrane helix</keyword>
<feature type="initiator methionine" description="Removed" evidence="5 6 10 12 13">
    <location>
        <position position="1"/>
    </location>
</feature>
<feature type="chain" id="PRO_0000221158" description="Signal peptidase complex subunit 2">
    <location>
        <begin position="2"/>
        <end position="226"/>
    </location>
</feature>
<feature type="topological domain" description="Cytoplasmic" evidence="2">
    <location>
        <begin position="2"/>
        <end position="86"/>
    </location>
</feature>
<feature type="transmembrane region" description="Helical" evidence="3">
    <location>
        <begin position="87"/>
        <end position="107"/>
    </location>
</feature>
<feature type="topological domain" description="Lumenal" evidence="2">
    <location>
        <begin position="108"/>
        <end position="111"/>
    </location>
</feature>
<feature type="transmembrane region" description="Helical" evidence="3">
    <location>
        <begin position="112"/>
        <end position="132"/>
    </location>
</feature>
<feature type="topological domain" description="Cytoplasmic" evidence="2">
    <location>
        <begin position="133"/>
        <end position="226"/>
    </location>
</feature>
<feature type="region of interest" description="Disordered" evidence="4">
    <location>
        <begin position="1"/>
        <end position="25"/>
    </location>
</feature>
<feature type="compositionally biased region" description="Gly residues" evidence="4">
    <location>
        <begin position="9"/>
        <end position="25"/>
    </location>
</feature>
<feature type="modified residue" description="N-acetylalanine" evidence="5 6 10 12 13">
    <location>
        <position position="2"/>
    </location>
</feature>
<feature type="modified residue" description="N6-acetyllysine" evidence="11">
    <location>
        <position position="169"/>
    </location>
</feature>
<feature type="modified residue" description="N6-acetyllysine" evidence="11">
    <location>
        <position position="191"/>
    </location>
</feature>
<feature type="sequence conflict" description="In Ref. 1; AAH64957." evidence="7" ref="1">
    <original>A</original>
    <variation>V</variation>
    <location>
        <position position="64"/>
    </location>
</feature>
<proteinExistence type="evidence at protein level"/>
<protein>
    <recommendedName>
        <fullName>Signal peptidase complex subunit 2</fullName>
    </recommendedName>
    <alternativeName>
        <fullName>Microsomal signal peptidase 25 kDa subunit</fullName>
        <shortName>SPase 25 kDa subunit</shortName>
    </alternativeName>
</protein>
<organism>
    <name type="scientific">Homo sapiens</name>
    <name type="common">Human</name>
    <dbReference type="NCBI Taxonomy" id="9606"/>
    <lineage>
        <taxon>Eukaryota</taxon>
        <taxon>Metazoa</taxon>
        <taxon>Chordata</taxon>
        <taxon>Craniata</taxon>
        <taxon>Vertebrata</taxon>
        <taxon>Euteleostomi</taxon>
        <taxon>Mammalia</taxon>
        <taxon>Eutheria</taxon>
        <taxon>Euarchontoglires</taxon>
        <taxon>Primates</taxon>
        <taxon>Haplorrhini</taxon>
        <taxon>Catarrhini</taxon>
        <taxon>Hominidae</taxon>
        <taxon>Homo</taxon>
    </lineage>
</organism>
<dbReference type="EMBL" id="BC008063">
    <property type="protein sequence ID" value="AAH08063.3"/>
    <property type="status" value="ALT_INIT"/>
    <property type="molecule type" value="mRNA"/>
</dbReference>
<dbReference type="EMBL" id="BC064957">
    <property type="protein sequence ID" value="AAH64957.1"/>
    <property type="molecule type" value="mRNA"/>
</dbReference>
<dbReference type="EMBL" id="BC070276">
    <property type="protein sequence ID" value="AAH70276.2"/>
    <property type="status" value="ALT_INIT"/>
    <property type="molecule type" value="mRNA"/>
</dbReference>
<dbReference type="EMBL" id="BC082231">
    <property type="protein sequence ID" value="AAH82231.2"/>
    <property type="status" value="ALT_INIT"/>
    <property type="molecule type" value="mRNA"/>
</dbReference>
<dbReference type="EMBL" id="BC106066">
    <property type="protein sequence ID" value="AAI06067.1"/>
    <property type="molecule type" value="mRNA"/>
</dbReference>
<dbReference type="EMBL" id="L38950">
    <property type="protein sequence ID" value="AAA60992.1"/>
    <property type="molecule type" value="mRNA"/>
</dbReference>
<dbReference type="EMBL" id="D14658">
    <property type="protein sequence ID" value="BAA03492.1"/>
    <property type="status" value="ALT_INIT"/>
    <property type="molecule type" value="mRNA"/>
</dbReference>
<dbReference type="EMBL" id="CR542233">
    <property type="protein sequence ID" value="CAG47029.1"/>
    <property type="molecule type" value="mRNA"/>
</dbReference>
<dbReference type="EMBL" id="CR542243">
    <property type="protein sequence ID" value="CAG47039.1"/>
    <property type="molecule type" value="mRNA"/>
</dbReference>
<dbReference type="CCDS" id="CCDS44681.1"/>
<dbReference type="RefSeq" id="NP_055567.2">
    <property type="nucleotide sequence ID" value="NM_014752.3"/>
</dbReference>
<dbReference type="PDB" id="7P2P">
    <property type="method" value="EM"/>
    <property type="resolution" value="4.90 A"/>
    <property type="chains" value="C=1-226"/>
</dbReference>
<dbReference type="PDB" id="7P2Q">
    <property type="method" value="EM"/>
    <property type="resolution" value="4.90 A"/>
    <property type="chains" value="C=1-226"/>
</dbReference>
<dbReference type="PDBsum" id="7P2P"/>
<dbReference type="PDBsum" id="7P2Q"/>
<dbReference type="EMDB" id="EMD-13171"/>
<dbReference type="EMDB" id="EMD-13172"/>
<dbReference type="SMR" id="Q15005"/>
<dbReference type="BioGRID" id="115133">
    <property type="interactions" value="177"/>
</dbReference>
<dbReference type="ComplexPortal" id="CPX-2847">
    <property type="entry name" value="Signal peptidase complex, SEC11A variant"/>
</dbReference>
<dbReference type="ComplexPortal" id="CPX-7205">
    <property type="entry name" value="Signal peptidase complex, SEC11C variant"/>
</dbReference>
<dbReference type="DIP" id="DIP-47276N"/>
<dbReference type="FunCoup" id="Q15005">
    <property type="interactions" value="2361"/>
</dbReference>
<dbReference type="IntAct" id="Q15005">
    <property type="interactions" value="85"/>
</dbReference>
<dbReference type="MINT" id="Q15005"/>
<dbReference type="STRING" id="9606.ENSP00000263672"/>
<dbReference type="MEROPS" id="X44.001"/>
<dbReference type="GlyCosmos" id="Q15005">
    <property type="glycosylation" value="2 sites, 1 glycan"/>
</dbReference>
<dbReference type="GlyGen" id="Q15005">
    <property type="glycosylation" value="2 sites, 1 O-linked glycan (2 sites)"/>
</dbReference>
<dbReference type="iPTMnet" id="Q15005"/>
<dbReference type="PhosphoSitePlus" id="Q15005"/>
<dbReference type="SwissPalm" id="Q15005"/>
<dbReference type="BioMuta" id="SPCS2"/>
<dbReference type="DMDM" id="6648110"/>
<dbReference type="jPOST" id="Q15005"/>
<dbReference type="MassIVE" id="Q15005"/>
<dbReference type="PaxDb" id="9606-ENSP00000263672"/>
<dbReference type="PeptideAtlas" id="Q15005"/>
<dbReference type="ProteomicsDB" id="60356"/>
<dbReference type="Pumba" id="Q15005"/>
<dbReference type="TopDownProteomics" id="Q15005"/>
<dbReference type="Antibodypedia" id="2848">
    <property type="antibodies" value="122 antibodies from 20 providers"/>
</dbReference>
<dbReference type="DNASU" id="9789"/>
<dbReference type="Ensembl" id="ENST00000263672.11">
    <property type="protein sequence ID" value="ENSP00000263672.6"/>
    <property type="gene ID" value="ENSG00000118363.13"/>
</dbReference>
<dbReference type="GeneID" id="9789"/>
<dbReference type="KEGG" id="hsa:9789"/>
<dbReference type="MANE-Select" id="ENST00000263672.11">
    <property type="protein sequence ID" value="ENSP00000263672.6"/>
    <property type="RefSeq nucleotide sequence ID" value="NM_014752.3"/>
    <property type="RefSeq protein sequence ID" value="NP_055567.2"/>
</dbReference>
<dbReference type="UCSC" id="uc001ovu.2">
    <property type="organism name" value="human"/>
</dbReference>
<dbReference type="AGR" id="HGNC:28962"/>
<dbReference type="CTD" id="9789"/>
<dbReference type="GeneCards" id="SPCS2"/>
<dbReference type="HGNC" id="HGNC:28962">
    <property type="gene designation" value="SPCS2"/>
</dbReference>
<dbReference type="HPA" id="ENSG00000118363">
    <property type="expression patterns" value="Low tissue specificity"/>
</dbReference>
<dbReference type="MIM" id="619411">
    <property type="type" value="gene"/>
</dbReference>
<dbReference type="neXtProt" id="NX_Q15005"/>
<dbReference type="OpenTargets" id="ENSG00000118363"/>
<dbReference type="PharmGKB" id="PA128394559"/>
<dbReference type="VEuPathDB" id="HostDB:ENSG00000118363"/>
<dbReference type="eggNOG" id="KOG4072">
    <property type="taxonomic scope" value="Eukaryota"/>
</dbReference>
<dbReference type="GeneTree" id="ENSGT00440000038181"/>
<dbReference type="InParanoid" id="Q15005"/>
<dbReference type="OMA" id="INKWDGT"/>
<dbReference type="OrthoDB" id="29558at2759"/>
<dbReference type="PAN-GO" id="Q15005">
    <property type="GO annotations" value="3 GO annotations based on evolutionary models"/>
</dbReference>
<dbReference type="PhylomeDB" id="Q15005"/>
<dbReference type="TreeFam" id="TF314545"/>
<dbReference type="BRENDA" id="3.4.21.89">
    <property type="organism ID" value="2681"/>
</dbReference>
<dbReference type="PathwayCommons" id="Q15005"/>
<dbReference type="Reactome" id="R-HSA-1799339">
    <property type="pathway name" value="SRP-dependent cotranslational protein targeting to membrane"/>
</dbReference>
<dbReference type="Reactome" id="R-HSA-381771">
    <property type="pathway name" value="Synthesis, secretion, and inactivation of Glucagon-like Peptide-1 (GLP-1)"/>
</dbReference>
<dbReference type="Reactome" id="R-HSA-400511">
    <property type="pathway name" value="Synthesis, secretion, and inactivation of Glucose-dependent Insulinotropic Polypeptide (GIP)"/>
</dbReference>
<dbReference type="Reactome" id="R-HSA-422085">
    <property type="pathway name" value="Synthesis, secretion, and deacylation of Ghrelin"/>
</dbReference>
<dbReference type="Reactome" id="R-HSA-9828806">
    <property type="pathway name" value="Maturation of hRSV A proteins"/>
</dbReference>
<dbReference type="SignaLink" id="Q15005"/>
<dbReference type="BioGRID-ORCS" id="9789">
    <property type="hits" value="604 hits in 1116 CRISPR screens"/>
</dbReference>
<dbReference type="CD-CODE" id="91857CE7">
    <property type="entry name" value="Nucleolus"/>
</dbReference>
<dbReference type="CD-CODE" id="DEE660B4">
    <property type="entry name" value="Stress granule"/>
</dbReference>
<dbReference type="ChiTaRS" id="SPCS2">
    <property type="organism name" value="human"/>
</dbReference>
<dbReference type="GenomeRNAi" id="9789"/>
<dbReference type="Pharos" id="Q15005">
    <property type="development level" value="Tbio"/>
</dbReference>
<dbReference type="PRO" id="PR:Q15005"/>
<dbReference type="Proteomes" id="UP000005640">
    <property type="component" value="Chromosome 11"/>
</dbReference>
<dbReference type="RNAct" id="Q15005">
    <property type="molecule type" value="protein"/>
</dbReference>
<dbReference type="Bgee" id="ENSG00000118363">
    <property type="expression patterns" value="Expressed in ventricular zone and 134 other cell types or tissues"/>
</dbReference>
<dbReference type="ExpressionAtlas" id="Q15005">
    <property type="expression patterns" value="baseline and differential"/>
</dbReference>
<dbReference type="GO" id="GO:0005789">
    <property type="term" value="C:endoplasmic reticulum membrane"/>
    <property type="evidence" value="ECO:0000314"/>
    <property type="project" value="ComplexPortal"/>
</dbReference>
<dbReference type="GO" id="GO:0005787">
    <property type="term" value="C:signal peptidase complex"/>
    <property type="evidence" value="ECO:0000353"/>
    <property type="project" value="ComplexPortal"/>
</dbReference>
<dbReference type="GO" id="GO:0045047">
    <property type="term" value="P:protein targeting to ER"/>
    <property type="evidence" value="ECO:0000318"/>
    <property type="project" value="GO_Central"/>
</dbReference>
<dbReference type="GO" id="GO:0006465">
    <property type="term" value="P:signal peptide processing"/>
    <property type="evidence" value="ECO:0000314"/>
    <property type="project" value="ComplexPortal"/>
</dbReference>
<dbReference type="InterPro" id="IPR009582">
    <property type="entry name" value="Spc2/SPCS2"/>
</dbReference>
<dbReference type="PANTHER" id="PTHR13085">
    <property type="entry name" value="MICROSOMAL SIGNAL PEPTIDASE 25 KDA SUBUNIT"/>
    <property type="match status" value="1"/>
</dbReference>
<dbReference type="PANTHER" id="PTHR13085:SF0">
    <property type="entry name" value="SIGNAL PEPTIDASE COMPLEX SUBUNIT 2"/>
    <property type="match status" value="1"/>
</dbReference>
<dbReference type="Pfam" id="PF06703">
    <property type="entry name" value="SPC25"/>
    <property type="match status" value="1"/>
</dbReference>
<gene>
    <name type="primary">SPCS2</name>
    <name type="synonym">KIAA0102</name>
    <name type="synonym">SPC25</name>
</gene>
<sequence length="226" mass="25003">MAAAAVQGGRSGGSGGCSGAGGASNCGTGSGRSGLLDKWKIDDKPVKIDKWDGSAVKNSLDDSAKKVLLEKYKYVENFGLIDGRLTICTISCFFAIVALIWDYMHPFPESKPVLALCVISYFVMMGILTIYTSYKEKSIFLVAHRKDPTGMDPDDIWQLSSSLKRFDDKYTLKLTFISGRTKQQREAEFTKSIAKFFDHSGTLVMDAYEPEISRLHDSLAIERKIK</sequence>
<reference key="1">
    <citation type="journal article" date="2004" name="Genome Res.">
        <title>The status, quality, and expansion of the NIH full-length cDNA project: the Mammalian Gene Collection (MGC).</title>
        <authorList>
            <consortium name="The MGC Project Team"/>
        </authorList>
    </citation>
    <scope>NUCLEOTIDE SEQUENCE [LARGE SCALE MRNA]</scope>
    <source>
        <tissue>Lung</tissue>
        <tissue>Pancreas</tissue>
        <tissue>Skin</tissue>
        <tissue>Testis</tissue>
    </source>
</reference>
<reference key="2">
    <citation type="submission" date="1995-01" db="EMBL/GenBank/DDBJ databases">
        <title>5'-end of human signal peptidase 25kDa subunit mRNA.</title>
        <authorList>
            <person name="Hartmann E."/>
        </authorList>
    </citation>
    <scope>NUCLEOTIDE SEQUENCE [MRNA] OF 1-37</scope>
</reference>
<reference key="3">
    <citation type="journal article" date="1995" name="DNA Res.">
        <title>Prediction of the coding sequences of unidentified human genes. III. The coding sequences of 40 new genes (KIAA0081-KIAA0120) deduced by analysis of cDNA clones from human cell line KG-1.</title>
        <authorList>
            <person name="Nagase T."/>
            <person name="Miyajima N."/>
            <person name="Tanaka A."/>
            <person name="Sazuka T."/>
            <person name="Seki N."/>
            <person name="Sato S."/>
            <person name="Tabata S."/>
            <person name="Ishikawa K."/>
            <person name="Kawarabayasi Y."/>
            <person name="Kotani H."/>
            <person name="Nomura N."/>
        </authorList>
    </citation>
    <scope>NUCLEOTIDE SEQUENCE [LARGE SCALE MRNA] OF 2-226</scope>
    <source>
        <tissue>Bone marrow</tissue>
    </source>
</reference>
<reference key="4">
    <citation type="submission" date="2009-05" db="UniProtKB">
        <authorList>
            <person name="Bienvenut W.V."/>
            <person name="Lao L."/>
            <person name="Ryan K.M."/>
        </authorList>
    </citation>
    <scope>PROTEIN SEQUENCE OF 2-10; 174-180 AND 196-214</scope>
    <scope>CLEAVAGE OF INITIATOR METHIONINE</scope>
    <scope>ACETYLATION AT ALA-2</scope>
    <scope>IDENTIFICATION BY MASS SPECTROMETRY</scope>
    <source>
        <tissue>Cervix carcinoma</tissue>
    </source>
</reference>
<reference key="5">
    <citation type="submission" date="2004-06" db="EMBL/GenBank/DDBJ databases">
        <title>Cloning of human full open reading frames in Gateway(TM) system entry vector (pDONR201).</title>
        <authorList>
            <person name="Ebert L."/>
            <person name="Schick M."/>
            <person name="Neubert P."/>
            <person name="Schatten R."/>
            <person name="Henze S."/>
            <person name="Korn B."/>
        </authorList>
    </citation>
    <scope>NUCLEOTIDE SEQUENCE [LARGE SCALE MRNA] OF 104-226</scope>
</reference>
<reference key="6">
    <citation type="journal article" date="2009" name="Anal. Chem.">
        <title>Lys-N and trypsin cover complementary parts of the phosphoproteome in a refined SCX-based approach.</title>
        <authorList>
            <person name="Gauci S."/>
            <person name="Helbig A.O."/>
            <person name="Slijper M."/>
            <person name="Krijgsveld J."/>
            <person name="Heck A.J."/>
            <person name="Mohammed S."/>
        </authorList>
    </citation>
    <scope>ACETYLATION [LARGE SCALE ANALYSIS] AT ALA-2</scope>
    <scope>CLEAVAGE OF INITIATOR METHIONINE [LARGE SCALE ANALYSIS]</scope>
    <scope>IDENTIFICATION BY MASS SPECTROMETRY [LARGE SCALE ANALYSIS]</scope>
</reference>
<reference key="7">
    <citation type="journal article" date="2009" name="Science">
        <title>Lysine acetylation targets protein complexes and co-regulates major cellular functions.</title>
        <authorList>
            <person name="Choudhary C."/>
            <person name="Kumar C."/>
            <person name="Gnad F."/>
            <person name="Nielsen M.L."/>
            <person name="Rehman M."/>
            <person name="Walther T.C."/>
            <person name="Olsen J.V."/>
            <person name="Mann M."/>
        </authorList>
    </citation>
    <scope>ACETYLATION [LARGE SCALE ANALYSIS] AT LYS-169 AND LYS-191</scope>
    <scope>IDENTIFICATION BY MASS SPECTROMETRY [LARGE SCALE ANALYSIS]</scope>
</reference>
<reference key="8">
    <citation type="journal article" date="2011" name="BMC Syst. Biol.">
        <title>Initial characterization of the human central proteome.</title>
        <authorList>
            <person name="Burkard T.R."/>
            <person name="Planyavsky M."/>
            <person name="Kaupe I."/>
            <person name="Breitwieser F.P."/>
            <person name="Buerckstuemmer T."/>
            <person name="Bennett K.L."/>
            <person name="Superti-Furga G."/>
            <person name="Colinge J."/>
        </authorList>
    </citation>
    <scope>IDENTIFICATION BY MASS SPECTROMETRY [LARGE SCALE ANALYSIS]</scope>
</reference>
<reference key="9">
    <citation type="journal article" date="2012" name="Proc. Natl. Acad. Sci. U.S.A.">
        <title>N-terminal acetylome analyses and functional insights of the N-terminal acetyltransferase NatB.</title>
        <authorList>
            <person name="Van Damme P."/>
            <person name="Lasa M."/>
            <person name="Polevoda B."/>
            <person name="Gazquez C."/>
            <person name="Elosegui-Artola A."/>
            <person name="Kim D.S."/>
            <person name="De Juan-Pardo E."/>
            <person name="Demeyer K."/>
            <person name="Hole K."/>
            <person name="Larrea E."/>
            <person name="Timmerman E."/>
            <person name="Prieto J."/>
            <person name="Arnesen T."/>
            <person name="Sherman F."/>
            <person name="Gevaert K."/>
            <person name="Aldabe R."/>
        </authorList>
    </citation>
    <scope>ACETYLATION [LARGE SCALE ANALYSIS] AT ALA-2</scope>
    <scope>CLEAVAGE OF INITIATOR METHIONINE [LARGE SCALE ANALYSIS]</scope>
    <scope>IDENTIFICATION BY MASS SPECTROMETRY [LARGE SCALE ANALYSIS]</scope>
</reference>
<reference key="10">
    <citation type="journal article" date="2014" name="J. Proteomics">
        <title>An enzyme assisted RP-RPLC approach for in-depth analysis of human liver phosphoproteome.</title>
        <authorList>
            <person name="Bian Y."/>
            <person name="Song C."/>
            <person name="Cheng K."/>
            <person name="Dong M."/>
            <person name="Wang F."/>
            <person name="Huang J."/>
            <person name="Sun D."/>
            <person name="Wang L."/>
            <person name="Ye M."/>
            <person name="Zou H."/>
        </authorList>
    </citation>
    <scope>IDENTIFICATION BY MASS SPECTROMETRY [LARGE SCALE ANALYSIS]</scope>
    <source>
        <tissue>Liver</tissue>
    </source>
</reference>
<reference key="11">
    <citation type="journal article" date="2015" name="Proteomics">
        <title>N-terminome analysis of the human mitochondrial proteome.</title>
        <authorList>
            <person name="Vaca Jacome A.S."/>
            <person name="Rabilloud T."/>
            <person name="Schaeffer-Reiss C."/>
            <person name="Rompais M."/>
            <person name="Ayoub D."/>
            <person name="Lane L."/>
            <person name="Bairoch A."/>
            <person name="Van Dorsselaer A."/>
            <person name="Carapito C."/>
        </authorList>
    </citation>
    <scope>ACETYLATION [LARGE SCALE ANALYSIS] AT ALA-2</scope>
    <scope>CLEAVAGE OF INITIATOR METHIONINE [LARGE SCALE ANALYSIS]</scope>
    <scope>IDENTIFICATION BY MASS SPECTROMETRY [LARGE SCALE ANALYSIS]</scope>
</reference>
<reference evidence="8 9" key="12">
    <citation type="journal article" date="2021" name="Mol. Cell">
        <title>Structure of the human signal peptidase complex reveals the determinants for signal peptide cleavage.</title>
        <authorList>
            <person name="Liaci A.M."/>
            <person name="Steigenberger B."/>
            <person name="Telles de Souza P.C."/>
            <person name="Tamara S."/>
            <person name="Groellers-Mulderij M."/>
            <person name="Ogrissek P."/>
            <person name="Marrink S.J."/>
            <person name="Scheltema R.A."/>
            <person name="Foerster F."/>
        </authorList>
    </citation>
    <scope>STRUCTURE BY ELECTRON MICROSCOPY (4.9 ANGSTROMS)</scope>
    <scope>FUNCTION</scope>
    <scope>IDENTIFICATION IN THE SIGNAL PEPTIDASE COMPLEX</scope>
    <scope>CLEAVAGE OF INITIATOR METHIONINE</scope>
    <scope>ACETYLATION AT ALA-2</scope>
</reference>
<accession>Q15005</accession>
<accession>Q15507</accession>
<accession>Q3KQT0</accession>
<accession>Q641R4</accession>
<accession>Q6FG65</accession>
<accession>Q6IRX0</accession>
<accession>Q6P1P4</accession>
<accession>Q96HU9</accession>
<evidence type="ECO:0000250" key="1">
    <source>
        <dbReference type="UniProtKB" id="Q04969"/>
    </source>
</evidence>
<evidence type="ECO:0000250" key="2">
    <source>
        <dbReference type="UniProtKB" id="Q28250"/>
    </source>
</evidence>
<evidence type="ECO:0000255" key="3"/>
<evidence type="ECO:0000256" key="4">
    <source>
        <dbReference type="SAM" id="MobiDB-lite"/>
    </source>
</evidence>
<evidence type="ECO:0000269" key="5">
    <source>
    </source>
</evidence>
<evidence type="ECO:0000269" key="6">
    <source ref="4"/>
</evidence>
<evidence type="ECO:0000305" key="7"/>
<evidence type="ECO:0007744" key="8">
    <source>
        <dbReference type="PDB" id="7P2P"/>
    </source>
</evidence>
<evidence type="ECO:0007744" key="9">
    <source>
        <dbReference type="PDB" id="7P2Q"/>
    </source>
</evidence>
<evidence type="ECO:0007744" key="10">
    <source>
    </source>
</evidence>
<evidence type="ECO:0007744" key="11">
    <source>
    </source>
</evidence>
<evidence type="ECO:0007744" key="12">
    <source>
    </source>
</evidence>
<evidence type="ECO:0007744" key="13">
    <source>
    </source>
</evidence>